<comment type="function">
    <text evidence="1">Symporter that uses the Na(+) gradient as the driving force for the uptake of the sialic acid N-acetylneuraminic acid (Neu5Ac) (PubMed:29717135). It allows the use of host-derived Neu5Ac as an energy source by P.mirabilis (PubMed:29717135). Also binds N-glycolylneuraminic acid (Neu5Gc) and ketodeoxynonulosonic acid (KDN) (PubMed:29717135). Shows the highest affinity for Neu5Ac and Neu5Gc, which commonly occupy the terminal non-reducing position of mammalian cell surface glycoconjugates (PubMed:29717135).</text>
</comment>
<comment type="catalytic activity">
    <reaction evidence="1">
        <text>N-acetyl-alpha-neuraminate(out) + 2 Na(+)(out) = N-acetyl-alpha-neuraminate(in) + 2 Na(+)(in)</text>
        <dbReference type="Rhea" id="RHEA:78535"/>
        <dbReference type="ChEBI" id="CHEBI:29101"/>
        <dbReference type="ChEBI" id="CHEBI:58770"/>
    </reaction>
    <physiologicalReaction direction="left-to-right" evidence="1">
        <dbReference type="Rhea" id="RHEA:78536"/>
    </physiologicalReaction>
</comment>
<comment type="activity regulation">
    <text evidence="1">Both Na(+) sites regulate Neu5Ac transport (PubMed:29717135). The binding energy of the second Na(+) ion may be used to allosterically stabilize the substrate without directly coordinating it (PubMed:29717135). In the absence of external Na(+), the rate is reduced by 78% (PubMed:29717135).</text>
</comment>
<comment type="biophysicochemical properties">
    <kinetics>
        <KM evidence="1">16 uM for Neu5Ac</KM>
        <Vmax evidence="1">187.0 nmol/min/mg enzyme</Vmax>
    </kinetics>
</comment>
<comment type="subcellular location">
    <subcellularLocation>
        <location evidence="1">Cell inner membrane</location>
        <topology evidence="1">Multi-pass membrane protein</topology>
    </subcellularLocation>
</comment>
<comment type="domain">
    <text evidence="1">Adopts the LeuT fold and is in an outward-open conformation in the crystals (PubMed:29717135). One Na(+) ion binds to the Na2 site, which is conserved in the SSF family, while the second Na(+) ion binds to a new position, termed Na3 (PubMed:29717135).</text>
</comment>
<comment type="biotechnology">
    <text evidence="2">Sialic acid plays a critical role for growth and colonization of several pathogenic bacteria, and inhibition of its uptake represents a promising strategy for the development of novel antibacterial drugs (PubMed:36121381). Potential sialic acid uptake inhibitors include sialic acid 4-N-piperazine and piperidine derivatives (PubMed:36121381).</text>
</comment>
<comment type="miscellaneous">
    <text evidence="1">Rescues growth on Neu5Ac as the sole carbon source of an E.coli strain that lacks the endogenous NanT sialic acid transporter.</text>
</comment>
<comment type="similarity">
    <text evidence="4">Belongs to the sodium:solute symporter (SSF) (TC 2.A.21) family.</text>
</comment>
<feature type="chain" id="PRO_0000460286" description="Sodium/sialic acid symporter SiaT">
    <location>
        <begin position="1"/>
        <end position="496"/>
    </location>
</feature>
<feature type="topological domain" description="Periplasmic" evidence="1 7 8">
    <location>
        <begin position="1"/>
        <end position="7"/>
    </location>
</feature>
<feature type="transmembrane region" description="Helical" evidence="1 7 8">
    <location>
        <begin position="8"/>
        <end position="29"/>
    </location>
</feature>
<feature type="topological domain" description="Cytoplasmic" evidence="1 7 8">
    <location>
        <begin position="30"/>
        <end position="46"/>
    </location>
</feature>
<feature type="transmembrane region" description="Helical" evidence="1 7 8">
    <location>
        <begin position="47"/>
        <end position="59"/>
    </location>
</feature>
<feature type="topological domain" description="Periplasmic" evidence="1 7 8">
    <location>
        <begin position="60"/>
        <end position="76"/>
    </location>
</feature>
<feature type="transmembrane region" description="Helical" evidence="1 7 8">
    <location>
        <begin position="77"/>
        <end position="92"/>
    </location>
</feature>
<feature type="topological domain" description="Cytoplasmic" evidence="1 7 8">
    <location>
        <begin position="93"/>
        <end position="116"/>
    </location>
</feature>
<feature type="transmembrane region" description="Helical" evidence="1 7 8">
    <location>
        <begin position="117"/>
        <end position="144"/>
    </location>
</feature>
<feature type="topological domain" description="Periplasmic" evidence="1 7 8">
    <location>
        <begin position="145"/>
        <end position="154"/>
    </location>
</feature>
<feature type="transmembrane region" description="Helical" evidence="1 7 8">
    <location>
        <begin position="155"/>
        <end position="172"/>
    </location>
</feature>
<feature type="topological domain" description="Cytoplasmic" evidence="1 7 8">
    <location>
        <begin position="173"/>
        <end position="174"/>
    </location>
</feature>
<feature type="transmembrane region" description="Helical" evidence="1 7 8">
    <location>
        <begin position="175"/>
        <end position="199"/>
    </location>
</feature>
<feature type="topological domain" description="Periplasmic" evidence="1 7 8">
    <location>
        <begin position="200"/>
        <end position="235"/>
    </location>
</feature>
<feature type="transmembrane region" description="Helical" evidence="1 7 8">
    <location>
        <begin position="236"/>
        <end position="252"/>
    </location>
</feature>
<feature type="topological domain" description="Cytoplasmic" evidence="1 7 8">
    <location>
        <begin position="253"/>
        <end position="272"/>
    </location>
</feature>
<feature type="transmembrane region" description="Helical" evidence="1 7 8">
    <location>
        <begin position="273"/>
        <end position="292"/>
    </location>
</feature>
<feature type="topological domain" description="Periplasmic" evidence="1 7 8">
    <location>
        <begin position="293"/>
        <end position="325"/>
    </location>
</feature>
<feature type="transmembrane region" description="Helical" evidence="1 7 8">
    <location>
        <begin position="326"/>
        <end position="356"/>
    </location>
</feature>
<feature type="topological domain" description="Cytoplasmic" evidence="1 7 8">
    <location>
        <begin position="357"/>
        <end position="374"/>
    </location>
</feature>
<feature type="transmembrane region" description="Helical" evidence="1 7 8">
    <location>
        <begin position="375"/>
        <end position="396"/>
    </location>
</feature>
<feature type="topological domain" description="Periplasmic" evidence="1 7 8">
    <location>
        <begin position="397"/>
        <end position="403"/>
    </location>
</feature>
<feature type="transmembrane region" description="Helical" evidence="1 7 8">
    <location>
        <begin position="404"/>
        <end position="427"/>
    </location>
</feature>
<feature type="topological domain" description="Cytoplasmic" evidence="1 7 8">
    <location>
        <begin position="428"/>
        <end position="432"/>
    </location>
</feature>
<feature type="transmembrane region" description="Helical" evidence="1 7 8">
    <location>
        <begin position="433"/>
        <end position="453"/>
    </location>
</feature>
<feature type="topological domain" description="Periplasmic" evidence="1 7 8">
    <location>
        <begin position="454"/>
        <end position="457"/>
    </location>
</feature>
<feature type="transmembrane region" description="Helical" evidence="1 7 8">
    <location>
        <begin position="458"/>
        <end position="479"/>
    </location>
</feature>
<feature type="topological domain" description="Cytoplasmic" evidence="1 7 8">
    <location>
        <begin position="480"/>
        <end position="496"/>
    </location>
</feature>
<feature type="binding site" evidence="1 7 8">
    <location>
        <position position="56"/>
    </location>
    <ligand>
        <name>Na(+)</name>
        <dbReference type="ChEBI" id="CHEBI:29101"/>
        <label>1</label>
    </ligand>
</feature>
<feature type="binding site" evidence="5 7 8">
    <location>
        <position position="58"/>
    </location>
    <ligand>
        <name>N-acetyl-alpha-neuraminate</name>
        <dbReference type="ChEBI" id="CHEBI:58770"/>
    </ligand>
</feature>
<feature type="binding site" evidence="1 7 8">
    <location>
        <position position="59"/>
    </location>
    <ligand>
        <name>Na(+)</name>
        <dbReference type="ChEBI" id="CHEBI:29101"/>
        <label>1</label>
    </ligand>
</feature>
<feature type="binding site" evidence="5 7 8">
    <location>
        <position position="60"/>
    </location>
    <ligand>
        <name>N-acetyl-alpha-neuraminate</name>
        <dbReference type="ChEBI" id="CHEBI:58770"/>
    </ligand>
</feature>
<feature type="binding site" evidence="5 7 8">
    <location>
        <position position="63"/>
    </location>
    <ligand>
        <name>N-acetyl-alpha-neuraminate</name>
        <dbReference type="ChEBI" id="CHEBI:58770"/>
    </ligand>
</feature>
<feature type="binding site" evidence="5 7 8">
    <location>
        <position position="82"/>
    </location>
    <ligand>
        <name>N-acetyl-alpha-neuraminate</name>
        <dbReference type="ChEBI" id="CHEBI:58770"/>
    </ligand>
</feature>
<feature type="binding site" evidence="5 7 8">
    <location>
        <position position="135"/>
    </location>
    <ligand>
        <name>N-acetyl-alpha-neuraminate</name>
        <dbReference type="ChEBI" id="CHEBI:58770"/>
    </ligand>
</feature>
<feature type="binding site" evidence="1 7 8">
    <location>
        <position position="182"/>
    </location>
    <ligand>
        <name>Na(+)</name>
        <dbReference type="ChEBI" id="CHEBI:29101"/>
        <label>2</label>
    </ligand>
</feature>
<feature type="binding site" evidence="1 7 8">
    <location>
        <position position="339"/>
    </location>
    <ligand>
        <name>Na(+)</name>
        <dbReference type="ChEBI" id="CHEBI:29101"/>
        <label>1</label>
    </ligand>
</feature>
<feature type="binding site" evidence="1 7 8">
    <location>
        <position position="342"/>
    </location>
    <ligand>
        <name>Na(+)</name>
        <dbReference type="ChEBI" id="CHEBI:29101"/>
        <label>1</label>
    </ligand>
</feature>
<feature type="binding site" evidence="1 7 8">
    <location>
        <position position="342"/>
    </location>
    <ligand>
        <name>Na(+)</name>
        <dbReference type="ChEBI" id="CHEBI:29101"/>
        <label>2</label>
    </ligand>
</feature>
<feature type="binding site" evidence="1 7 8">
    <location>
        <position position="343"/>
    </location>
    <ligand>
        <name>Na(+)</name>
        <dbReference type="ChEBI" id="CHEBI:29101"/>
        <label>1</label>
    </ligand>
</feature>
<feature type="binding site" evidence="1 7 8">
    <location>
        <position position="345"/>
    </location>
    <ligand>
        <name>Na(+)</name>
        <dbReference type="ChEBI" id="CHEBI:29101"/>
        <label>2</label>
    </ligand>
</feature>
<feature type="binding site" evidence="1 7 8">
    <location>
        <position position="346"/>
    </location>
    <ligand>
        <name>Na(+)</name>
        <dbReference type="ChEBI" id="CHEBI:29101"/>
        <label>2</label>
    </ligand>
</feature>
<feature type="mutagenesis site" description="2-fold increase in Neu5Ac transport." evidence="1">
    <original>T</original>
    <variation>A</variation>
    <location>
        <position position="58"/>
    </location>
</feature>
<feature type="mutagenesis site" description="Abolishes Neu5Ac transport." evidence="1">
    <original>S</original>
    <variation>A</variation>
    <location>
        <position position="60"/>
    </location>
</feature>
<feature type="mutagenesis site" description="Abolishes Neu5Ac transport." evidence="1">
    <original>T</original>
    <variation>A</variation>
    <location>
        <position position="63"/>
    </location>
</feature>
<feature type="mutagenesis site" description="Abolishes Neu5Ac transport." evidence="1">
    <original>Q</original>
    <variation>D</variation>
    <location>
        <position position="82"/>
    </location>
</feature>
<feature type="mutagenesis site" description="Abolishes Neu5Ac transport." evidence="1">
    <original>R</original>
    <variation>E</variation>
    <location>
        <position position="135"/>
    </location>
</feature>
<feature type="mutagenesis site" description="Abolishes Neu5Ac transport." evidence="1">
    <original>D</original>
    <variation>A</variation>
    <location>
        <position position="182"/>
    </location>
</feature>
<feature type="mutagenesis site" description="Abolishes Neu5Ac transport." evidence="1">
    <original>S</original>
    <variation>A</variation>
    <location>
        <position position="342"/>
    </location>
</feature>
<feature type="mutagenesis site" description="Abolishes Neu5Ac transport." evidence="1">
    <original>S</original>
    <variation>A</variation>
    <location>
        <position position="343"/>
    </location>
</feature>
<feature type="mutagenesis site" description="Reduces Neu5Ac transport." evidence="1">
    <original>S</original>
    <variation>A</variation>
    <location>
        <position position="345"/>
    </location>
</feature>
<feature type="mutagenesis site" description="Slightly increases Neu5Ac transport." evidence="1">
    <original>S</original>
    <variation>A</variation>
    <location>
        <position position="346"/>
    </location>
</feature>
<feature type="helix" evidence="9">
    <location>
        <begin position="8"/>
        <end position="29"/>
    </location>
</feature>
<feature type="helix" evidence="9">
    <location>
        <begin position="35"/>
        <end position="40"/>
    </location>
</feature>
<feature type="helix" evidence="9">
    <location>
        <begin position="41"/>
        <end position="43"/>
    </location>
</feature>
<feature type="helix" evidence="9">
    <location>
        <begin position="47"/>
        <end position="58"/>
    </location>
</feature>
<feature type="helix" evidence="9">
    <location>
        <begin position="61"/>
        <end position="73"/>
    </location>
</feature>
<feature type="helix" evidence="9">
    <location>
        <begin position="77"/>
        <end position="79"/>
    </location>
</feature>
<feature type="helix" evidence="9">
    <location>
        <begin position="80"/>
        <end position="87"/>
    </location>
</feature>
<feature type="helix" evidence="9">
    <location>
        <begin position="89"/>
        <end position="95"/>
    </location>
</feature>
<feature type="helix" evidence="9">
    <location>
        <begin position="97"/>
        <end position="102"/>
    </location>
</feature>
<feature type="helix" evidence="9">
    <location>
        <begin position="110"/>
        <end position="115"/>
    </location>
</feature>
<feature type="helix" evidence="9">
    <location>
        <begin position="118"/>
        <end position="151"/>
    </location>
</feature>
<feature type="helix" evidence="9">
    <location>
        <begin position="155"/>
        <end position="162"/>
    </location>
</feature>
<feature type="helix" evidence="9">
    <location>
        <begin position="164"/>
        <end position="203"/>
    </location>
</feature>
<feature type="helix" evidence="9">
    <location>
        <begin position="207"/>
        <end position="217"/>
    </location>
</feature>
<feature type="helix" evidence="9">
    <location>
        <begin position="224"/>
        <end position="226"/>
    </location>
</feature>
<feature type="strand" evidence="9">
    <location>
        <begin position="231"/>
        <end position="233"/>
    </location>
</feature>
<feature type="helix" evidence="9">
    <location>
        <begin position="236"/>
        <end position="252"/>
    </location>
</feature>
<feature type="helix" evidence="9">
    <location>
        <begin position="255"/>
        <end position="258"/>
    </location>
</feature>
<feature type="helix" evidence="9">
    <location>
        <begin position="259"/>
        <end position="261"/>
    </location>
</feature>
<feature type="strand" evidence="9">
    <location>
        <begin position="262"/>
        <end position="266"/>
    </location>
</feature>
<feature type="helix" evidence="9">
    <location>
        <begin position="267"/>
        <end position="301"/>
    </location>
</feature>
<feature type="helix" evidence="9">
    <location>
        <begin position="303"/>
        <end position="305"/>
    </location>
</feature>
<feature type="helix" evidence="9">
    <location>
        <begin position="312"/>
        <end position="314"/>
    </location>
</feature>
<feature type="helix" evidence="9">
    <location>
        <begin position="315"/>
        <end position="323"/>
    </location>
</feature>
<feature type="helix" evidence="9">
    <location>
        <begin position="328"/>
        <end position="358"/>
    </location>
</feature>
<feature type="turn" evidence="9">
    <location>
        <begin position="359"/>
        <end position="363"/>
    </location>
</feature>
<feature type="strand" evidence="9">
    <location>
        <begin position="364"/>
        <end position="366"/>
    </location>
</feature>
<feature type="helix" evidence="9">
    <location>
        <begin position="370"/>
        <end position="398"/>
    </location>
</feature>
<feature type="helix" evidence="9">
    <location>
        <begin position="405"/>
        <end position="412"/>
    </location>
</feature>
<feature type="helix" evidence="9">
    <location>
        <begin position="415"/>
        <end position="427"/>
    </location>
</feature>
<feature type="helix" evidence="9">
    <location>
        <begin position="433"/>
        <end position="452"/>
    </location>
</feature>
<feature type="helix" evidence="9">
    <location>
        <begin position="460"/>
        <end position="475"/>
    </location>
</feature>
<feature type="helix" evidence="9">
    <location>
        <begin position="477"/>
        <end position="479"/>
    </location>
</feature>
<gene>
    <name evidence="3" type="primary">siaT</name>
    <name evidence="6" type="ordered locus">PMI2976</name>
</gene>
<reference key="1">
    <citation type="journal article" date="2008" name="J. Bacteriol.">
        <title>Complete genome sequence of uropathogenic Proteus mirabilis, a master of both adherence and motility.</title>
        <authorList>
            <person name="Pearson M.M."/>
            <person name="Sebaihia M."/>
            <person name="Churcher C."/>
            <person name="Quail M.A."/>
            <person name="Seshasayee A.S."/>
            <person name="Luscombe N.M."/>
            <person name="Abdellah Z."/>
            <person name="Arrosmith C."/>
            <person name="Atkin B."/>
            <person name="Chillingworth T."/>
            <person name="Hauser H."/>
            <person name="Jagels K."/>
            <person name="Moule S."/>
            <person name="Mungall K."/>
            <person name="Norbertczak H."/>
            <person name="Rabbinowitsch E."/>
            <person name="Walker D."/>
            <person name="Whithead S."/>
            <person name="Thomson N.R."/>
            <person name="Rather P.N."/>
            <person name="Parkhill J."/>
            <person name="Mobley H.L.T."/>
        </authorList>
    </citation>
    <scope>NUCLEOTIDE SEQUENCE [LARGE SCALE GENOMIC DNA]</scope>
    <source>
        <strain>HI4320</strain>
    </source>
</reference>
<reference key="2">
    <citation type="journal article" date="2022" name="ChemMedChem">
        <title>Sialic Acid 4-N-Piperazine and Piperidine Derivatives Bind with High Affinity to the P. mirabilis Sialic Acid Sodium Solute Symporter.</title>
        <authorList>
            <person name="Bozzola T."/>
            <person name="Johnsson R.E."/>
            <person name="Nilsson U.J."/>
            <person name="Ellervik U."/>
        </authorList>
    </citation>
    <scope>BIOTECHNOLOGY</scope>
</reference>
<reference evidence="7 8" key="3">
    <citation type="journal article" date="2018" name="Nat. Commun.">
        <title>Substrate-bound outward-open structure of a Na(+)-coupled sialic acid symporter reveals a new Na(+) site.</title>
        <authorList>
            <person name="Wahlgren W.Y."/>
            <person name="Dunevall E."/>
            <person name="North R.A."/>
            <person name="Paz A."/>
            <person name="Scalise M."/>
            <person name="Bisignano P."/>
            <person name="Bengtsson-Palme J."/>
            <person name="Goyal P."/>
            <person name="Claesson E."/>
            <person name="Caing-Carlsson R."/>
            <person name="Andersson R."/>
            <person name="Beis K."/>
            <person name="Nilsson U.J."/>
            <person name="Farewell A."/>
            <person name="Pochini L."/>
            <person name="Indiveri C."/>
            <person name="Grabe M."/>
            <person name="Dobson R.C.J."/>
            <person name="Abramson J."/>
            <person name="Ramaswamy S."/>
            <person name="Friemann R."/>
        </authorList>
    </citation>
    <scope>X-RAY CRYSTALLOGRAPHY (1.95 ANGSTROMS) IN COMPLEX WITH N-ACETYL-BETA-NEURAMINIC ACID AND SODIUM IONS</scope>
    <scope>FUNCTION</scope>
    <scope>TRANSPORTER ACTIVITY</scope>
    <scope>ACTIVITY REGULATION</scope>
    <scope>BIOPHYSICOCHEMICAL PROPERTIES</scope>
    <scope>SUBCELLULAR LOCATION</scope>
    <scope>TOPOLOGY</scope>
    <scope>DOMAIN</scope>
    <scope>MUTAGENESIS OF THR-58; SER-60; THR-63; GLN-82; ARG-135; ASP-182; SER-342; SER-343; SER-345 AND SER-346</scope>
    <source>
        <strain>HI4320</strain>
    </source>
</reference>
<name>SIAT_PROMH</name>
<protein>
    <recommendedName>
        <fullName evidence="4">Sodium/sialic acid symporter SiaT</fullName>
    </recommendedName>
    <alternativeName>
        <fullName evidence="3">Na(+)-coupled sialic acid symporter</fullName>
    </alternativeName>
    <alternativeName>
        <fullName evidence="3">Sialic acid transporter</fullName>
    </alternativeName>
</protein>
<keyword id="KW-0002">3D-structure</keyword>
<keyword id="KW-0997">Cell inner membrane</keyword>
<keyword id="KW-1003">Cell membrane</keyword>
<keyword id="KW-0406">Ion transport</keyword>
<keyword id="KW-0472">Membrane</keyword>
<keyword id="KW-1185">Reference proteome</keyword>
<keyword id="KW-0915">Sodium</keyword>
<keyword id="KW-0739">Sodium transport</keyword>
<keyword id="KW-0762">Sugar transport</keyword>
<keyword id="KW-0769">Symport</keyword>
<keyword id="KW-0812">Transmembrane</keyword>
<keyword id="KW-1133">Transmembrane helix</keyword>
<keyword id="KW-0813">Transport</keyword>
<accession>B4EZY7</accession>
<proteinExistence type="evidence at protein level"/>
<sequence>MQLHDFGFINYAVLFGYLAAMLLVGVYFSKRQKTADDYFRGGGRVPGWAAGVSVFATTLSSITFMSIPAKAYTSDWTFIIGQYLAIAILPLVFYFYIPFFRKLKITSAYEYLEARFDVRSRLFASLSFMLFHIGRVAIITYLTVLALRPFMGIDPVVLIVLISLLCIIYTWMGGIEGVIWTDVIQGLLLSGGAVLIFIMICFKVDGGISEIFTTTAQADKFFPTTQWRWSWTDSTIPVLMIGFLFANIQQFTASQDVVQRYIVTDSIKETKRTLITNAKLVAIIPIFFFAIGSALFVYYQQNPSLLPAGFNTGGILPLFIVTEMPIGIAGLIIAAIFAAAQSSISSSLNSISSCFNSDIYTRLSKSSPSPEQKMKVAKLVIIVAGIFSSLAAIWLVLSDEAEIWDAFNSLIGLMGGPMTGLFMLGIFVKRANAGSAVVGIIVSIIAVLAARYGSDLNFFFYGVIGSMSVVIAGTITAPLFAPAKQLSLDDSETSEN</sequence>
<evidence type="ECO:0000269" key="1">
    <source>
    </source>
</evidence>
<evidence type="ECO:0000269" key="2">
    <source>
    </source>
</evidence>
<evidence type="ECO:0000303" key="3">
    <source>
    </source>
</evidence>
<evidence type="ECO:0000305" key="4"/>
<evidence type="ECO:0000305" key="5">
    <source>
    </source>
</evidence>
<evidence type="ECO:0000312" key="6">
    <source>
        <dbReference type="EMBL" id="CAR45855.1"/>
    </source>
</evidence>
<evidence type="ECO:0007744" key="7">
    <source>
        <dbReference type="PDB" id="5NV9"/>
    </source>
</evidence>
<evidence type="ECO:0007744" key="8">
    <source>
        <dbReference type="PDB" id="5NVA"/>
    </source>
</evidence>
<evidence type="ECO:0007829" key="9">
    <source>
        <dbReference type="PDB" id="5NV9"/>
    </source>
</evidence>
<organism>
    <name type="scientific">Proteus mirabilis (strain HI4320)</name>
    <dbReference type="NCBI Taxonomy" id="529507"/>
    <lineage>
        <taxon>Bacteria</taxon>
        <taxon>Pseudomonadati</taxon>
        <taxon>Pseudomonadota</taxon>
        <taxon>Gammaproteobacteria</taxon>
        <taxon>Enterobacterales</taxon>
        <taxon>Morganellaceae</taxon>
        <taxon>Proteus</taxon>
    </lineage>
</organism>
<dbReference type="EMBL" id="AM942759">
    <property type="protein sequence ID" value="CAR45855.1"/>
    <property type="molecule type" value="Genomic_DNA"/>
</dbReference>
<dbReference type="RefSeq" id="WP_004246686.1">
    <property type="nucleotide sequence ID" value="NC_010554.1"/>
</dbReference>
<dbReference type="PDB" id="5NV9">
    <property type="method" value="X-ray"/>
    <property type="resolution" value="1.95 A"/>
    <property type="chains" value="A=1-496"/>
</dbReference>
<dbReference type="PDB" id="5NVA">
    <property type="method" value="X-ray"/>
    <property type="resolution" value="2.26 A"/>
    <property type="chains" value="A=1-496"/>
</dbReference>
<dbReference type="PDBsum" id="5NV9"/>
<dbReference type="PDBsum" id="5NVA"/>
<dbReference type="SMR" id="B4EZY7"/>
<dbReference type="EnsemblBacteria" id="CAR45855">
    <property type="protein sequence ID" value="CAR45855"/>
    <property type="gene ID" value="PMI2976"/>
</dbReference>
<dbReference type="GeneID" id="6800530"/>
<dbReference type="KEGG" id="pmr:PMI2976"/>
<dbReference type="eggNOG" id="COG0591">
    <property type="taxonomic scope" value="Bacteria"/>
</dbReference>
<dbReference type="HOGENOM" id="CLU_018808_11_4_6"/>
<dbReference type="Proteomes" id="UP000008319">
    <property type="component" value="Chromosome"/>
</dbReference>
<dbReference type="GO" id="GO:0005886">
    <property type="term" value="C:plasma membrane"/>
    <property type="evidence" value="ECO:0007669"/>
    <property type="project" value="UniProtKB-SubCell"/>
</dbReference>
<dbReference type="GO" id="GO:0015293">
    <property type="term" value="F:symporter activity"/>
    <property type="evidence" value="ECO:0007669"/>
    <property type="project" value="UniProtKB-KW"/>
</dbReference>
<dbReference type="GO" id="GO:0006814">
    <property type="term" value="P:sodium ion transport"/>
    <property type="evidence" value="ECO:0007669"/>
    <property type="project" value="UniProtKB-KW"/>
</dbReference>
<dbReference type="CDD" id="cd11495">
    <property type="entry name" value="SLC5sbd_NIS-like_u3"/>
    <property type="match status" value="1"/>
</dbReference>
<dbReference type="Gene3D" id="1.20.1730.10">
    <property type="entry name" value="Sodium/glucose cotransporter"/>
    <property type="match status" value="1"/>
</dbReference>
<dbReference type="InterPro" id="IPR038377">
    <property type="entry name" value="Na/Glc_symporter_sf"/>
</dbReference>
<dbReference type="InterPro" id="IPR001734">
    <property type="entry name" value="Na/solute_symporter"/>
</dbReference>
<dbReference type="InterPro" id="IPR051163">
    <property type="entry name" value="Sodium:Solute_Symporter_SSF"/>
</dbReference>
<dbReference type="NCBIfam" id="TIGR00813">
    <property type="entry name" value="sss"/>
    <property type="match status" value="1"/>
</dbReference>
<dbReference type="PANTHER" id="PTHR42985:SF40">
    <property type="entry name" value="LD47995P-RELATED"/>
    <property type="match status" value="1"/>
</dbReference>
<dbReference type="PANTHER" id="PTHR42985">
    <property type="entry name" value="SODIUM-COUPLED MONOCARBOXYLATE TRANSPORTER"/>
    <property type="match status" value="1"/>
</dbReference>
<dbReference type="Pfam" id="PF00474">
    <property type="entry name" value="SSF"/>
    <property type="match status" value="1"/>
</dbReference>
<dbReference type="PROSITE" id="PS50283">
    <property type="entry name" value="NA_SOLUT_SYMP_3"/>
    <property type="match status" value="1"/>
</dbReference>